<proteinExistence type="inferred from homology"/>
<accession>C0ZVT5</accession>
<protein>
    <recommendedName>
        <fullName evidence="1">Small ribosomal subunit protein uS7</fullName>
    </recommendedName>
    <alternativeName>
        <fullName evidence="2">30S ribosomal protein S7</fullName>
    </alternativeName>
</protein>
<name>RS7_RHOE4</name>
<sequence>MPRKGPAPKRPLINDPVYGSPLVTQLVNKILLDGKKSTAERIVYQALEQAREKTGTDPVVTLKRALDNVKPALEVRSRRVGGATYQVPVEVRPGRSTTLALRWLVTFSRARREKTMVERLANELLDASNGLGAAVKRREDTHKMAEANKAFAHYRW</sequence>
<organism>
    <name type="scientific">Rhodococcus erythropolis (strain PR4 / NBRC 100887)</name>
    <dbReference type="NCBI Taxonomy" id="234621"/>
    <lineage>
        <taxon>Bacteria</taxon>
        <taxon>Bacillati</taxon>
        <taxon>Actinomycetota</taxon>
        <taxon>Actinomycetes</taxon>
        <taxon>Mycobacteriales</taxon>
        <taxon>Nocardiaceae</taxon>
        <taxon>Rhodococcus</taxon>
        <taxon>Rhodococcus erythropolis group</taxon>
    </lineage>
</organism>
<comment type="function">
    <text evidence="1">One of the primary rRNA binding proteins, it binds directly to 16S rRNA where it nucleates assembly of the head domain of the 30S subunit. Is located at the subunit interface close to the decoding center, probably blocks exit of the E-site tRNA.</text>
</comment>
<comment type="subunit">
    <text evidence="1">Part of the 30S ribosomal subunit. Contacts proteins S9 and S11.</text>
</comment>
<comment type="similarity">
    <text evidence="1">Belongs to the universal ribosomal protein uS7 family.</text>
</comment>
<reference key="1">
    <citation type="submission" date="2005-03" db="EMBL/GenBank/DDBJ databases">
        <title>Comparison of the complete genome sequences of Rhodococcus erythropolis PR4 and Rhodococcus opacus B4.</title>
        <authorList>
            <person name="Takarada H."/>
            <person name="Sekine M."/>
            <person name="Hosoyama A."/>
            <person name="Yamada R."/>
            <person name="Fujisawa T."/>
            <person name="Omata S."/>
            <person name="Shimizu A."/>
            <person name="Tsukatani N."/>
            <person name="Tanikawa S."/>
            <person name="Fujita N."/>
            <person name="Harayama S."/>
        </authorList>
    </citation>
    <scope>NUCLEOTIDE SEQUENCE [LARGE SCALE GENOMIC DNA]</scope>
    <source>
        <strain>PR4 / NBRC 100887</strain>
    </source>
</reference>
<keyword id="KW-0687">Ribonucleoprotein</keyword>
<keyword id="KW-0689">Ribosomal protein</keyword>
<keyword id="KW-0694">RNA-binding</keyword>
<keyword id="KW-0699">rRNA-binding</keyword>
<keyword id="KW-0820">tRNA-binding</keyword>
<gene>
    <name evidence="1" type="primary">rpsG</name>
    <name type="ordered locus">RER_17620</name>
</gene>
<dbReference type="EMBL" id="AP008957">
    <property type="protein sequence ID" value="BAH32470.1"/>
    <property type="molecule type" value="Genomic_DNA"/>
</dbReference>
<dbReference type="RefSeq" id="WP_003941856.1">
    <property type="nucleotide sequence ID" value="NC_012490.1"/>
</dbReference>
<dbReference type="SMR" id="C0ZVT5"/>
<dbReference type="GeneID" id="93802299"/>
<dbReference type="KEGG" id="rer:RER_17620"/>
<dbReference type="eggNOG" id="COG0049">
    <property type="taxonomic scope" value="Bacteria"/>
</dbReference>
<dbReference type="HOGENOM" id="CLU_072226_1_1_11"/>
<dbReference type="Proteomes" id="UP000002204">
    <property type="component" value="Chromosome"/>
</dbReference>
<dbReference type="GO" id="GO:0015935">
    <property type="term" value="C:small ribosomal subunit"/>
    <property type="evidence" value="ECO:0007669"/>
    <property type="project" value="InterPro"/>
</dbReference>
<dbReference type="GO" id="GO:0019843">
    <property type="term" value="F:rRNA binding"/>
    <property type="evidence" value="ECO:0007669"/>
    <property type="project" value="UniProtKB-UniRule"/>
</dbReference>
<dbReference type="GO" id="GO:0003735">
    <property type="term" value="F:structural constituent of ribosome"/>
    <property type="evidence" value="ECO:0007669"/>
    <property type="project" value="InterPro"/>
</dbReference>
<dbReference type="GO" id="GO:0000049">
    <property type="term" value="F:tRNA binding"/>
    <property type="evidence" value="ECO:0007669"/>
    <property type="project" value="UniProtKB-UniRule"/>
</dbReference>
<dbReference type="GO" id="GO:0006412">
    <property type="term" value="P:translation"/>
    <property type="evidence" value="ECO:0007669"/>
    <property type="project" value="UniProtKB-UniRule"/>
</dbReference>
<dbReference type="CDD" id="cd14869">
    <property type="entry name" value="uS7_Bacteria"/>
    <property type="match status" value="1"/>
</dbReference>
<dbReference type="FunFam" id="1.10.455.10:FF:000001">
    <property type="entry name" value="30S ribosomal protein S7"/>
    <property type="match status" value="1"/>
</dbReference>
<dbReference type="Gene3D" id="1.10.455.10">
    <property type="entry name" value="Ribosomal protein S7 domain"/>
    <property type="match status" value="1"/>
</dbReference>
<dbReference type="HAMAP" id="MF_00480_B">
    <property type="entry name" value="Ribosomal_uS7_B"/>
    <property type="match status" value="1"/>
</dbReference>
<dbReference type="InterPro" id="IPR000235">
    <property type="entry name" value="Ribosomal_uS7"/>
</dbReference>
<dbReference type="InterPro" id="IPR005717">
    <property type="entry name" value="Ribosomal_uS7_bac/org-type"/>
</dbReference>
<dbReference type="InterPro" id="IPR020606">
    <property type="entry name" value="Ribosomal_uS7_CS"/>
</dbReference>
<dbReference type="InterPro" id="IPR023798">
    <property type="entry name" value="Ribosomal_uS7_dom"/>
</dbReference>
<dbReference type="InterPro" id="IPR036823">
    <property type="entry name" value="Ribosomal_uS7_dom_sf"/>
</dbReference>
<dbReference type="NCBIfam" id="TIGR01029">
    <property type="entry name" value="rpsG_bact"/>
    <property type="match status" value="1"/>
</dbReference>
<dbReference type="PANTHER" id="PTHR11205">
    <property type="entry name" value="RIBOSOMAL PROTEIN S7"/>
    <property type="match status" value="1"/>
</dbReference>
<dbReference type="Pfam" id="PF00177">
    <property type="entry name" value="Ribosomal_S7"/>
    <property type="match status" value="1"/>
</dbReference>
<dbReference type="PIRSF" id="PIRSF002122">
    <property type="entry name" value="RPS7p_RPS7a_RPS5e_RPS7o"/>
    <property type="match status" value="1"/>
</dbReference>
<dbReference type="SUPFAM" id="SSF47973">
    <property type="entry name" value="Ribosomal protein S7"/>
    <property type="match status" value="1"/>
</dbReference>
<dbReference type="PROSITE" id="PS00052">
    <property type="entry name" value="RIBOSOMAL_S7"/>
    <property type="match status" value="1"/>
</dbReference>
<evidence type="ECO:0000255" key="1">
    <source>
        <dbReference type="HAMAP-Rule" id="MF_00480"/>
    </source>
</evidence>
<evidence type="ECO:0000305" key="2"/>
<feature type="chain" id="PRO_1000206413" description="Small ribosomal subunit protein uS7">
    <location>
        <begin position="1"/>
        <end position="156"/>
    </location>
</feature>